<sequence length="320" mass="34481">MSRSALIENVTAMLADAGFSVSDRCATRPKSFDVAARRGSDVVLMKVLVNIDAFDAETGAEMRRLGTYLHATPLVVGLRTRDEDLDPGVVYFRHGVPVFNPDTAMELFVDGIPPLVYAAPGGLYVNIDGDVLADRREDERLSLGQLASELGVSRRTVSKYEDGMNASIEVAMRLEDLFGGELTAPVDVMDGAEDVRDTDPTPDDPEAAPEDVPVLSVLARVGFEVHPTVQAPFKAVGEAGAGHDRLLTGHSAFTEAAVKRARIMSSVGEVTHTRAVYVVDEAGRESVDDTAIVEREELANVDDSEDLRDLLADRGDLQEA</sequence>
<accession>Q9HNG7</accession>
<dbReference type="EMBL" id="AE004437">
    <property type="protein sequence ID" value="AAG20253.1"/>
    <property type="status" value="ALT_INIT"/>
    <property type="molecule type" value="Genomic_DNA"/>
</dbReference>
<dbReference type="PIR" id="A84361">
    <property type="entry name" value="A84361"/>
</dbReference>
<dbReference type="RefSeq" id="WP_012289434.1">
    <property type="nucleotide sequence ID" value="NC_002607.1"/>
</dbReference>
<dbReference type="SMR" id="Q9HNG7"/>
<dbReference type="FunCoup" id="Q9HNG7">
    <property type="interactions" value="5"/>
</dbReference>
<dbReference type="STRING" id="64091.VNG_2112C"/>
<dbReference type="PaxDb" id="64091-VNG_2112C"/>
<dbReference type="KEGG" id="hal:VNG_2112C"/>
<dbReference type="PATRIC" id="fig|64091.14.peg.1613"/>
<dbReference type="HOGENOM" id="CLU_075726_0_0_2"/>
<dbReference type="InParanoid" id="Q9HNG7"/>
<dbReference type="OrthoDB" id="31424at2157"/>
<dbReference type="PhylomeDB" id="Q9HNG7"/>
<dbReference type="Proteomes" id="UP000000554">
    <property type="component" value="Chromosome"/>
</dbReference>
<dbReference type="GO" id="GO:0003677">
    <property type="term" value="F:DNA binding"/>
    <property type="evidence" value="ECO:0007669"/>
    <property type="project" value="UniProtKB-KW"/>
</dbReference>
<dbReference type="GO" id="GO:0003700">
    <property type="term" value="F:DNA-binding transcription factor activity"/>
    <property type="evidence" value="ECO:0007669"/>
    <property type="project" value="UniProtKB-UniRule"/>
</dbReference>
<dbReference type="CDD" id="cd00093">
    <property type="entry name" value="HTH_XRE"/>
    <property type="match status" value="1"/>
</dbReference>
<dbReference type="Gene3D" id="1.10.260.40">
    <property type="entry name" value="lambda repressor-like DNA-binding domains"/>
    <property type="match status" value="1"/>
</dbReference>
<dbReference type="HAMAP" id="MF_00584">
    <property type="entry name" value="HTH_type_cro_C1"/>
    <property type="match status" value="1"/>
</dbReference>
<dbReference type="InterPro" id="IPR020886">
    <property type="entry name" value="Arc_TR_HTH"/>
</dbReference>
<dbReference type="InterPro" id="IPR001387">
    <property type="entry name" value="Cro/C1-type_HTH"/>
</dbReference>
<dbReference type="InterPro" id="IPR010982">
    <property type="entry name" value="Lambda_DNA-bd_dom_sf"/>
</dbReference>
<dbReference type="NCBIfam" id="NF003162">
    <property type="entry name" value="PRK04140.1"/>
    <property type="match status" value="1"/>
</dbReference>
<dbReference type="Pfam" id="PF01381">
    <property type="entry name" value="HTH_3"/>
    <property type="match status" value="1"/>
</dbReference>
<dbReference type="SMART" id="SM00530">
    <property type="entry name" value="HTH_XRE"/>
    <property type="match status" value="1"/>
</dbReference>
<dbReference type="SUPFAM" id="SSF47413">
    <property type="entry name" value="lambda repressor-like DNA-binding domains"/>
    <property type="match status" value="1"/>
</dbReference>
<dbReference type="PROSITE" id="PS50943">
    <property type="entry name" value="HTH_CROC1"/>
    <property type="match status" value="1"/>
</dbReference>
<protein>
    <recommendedName>
        <fullName evidence="1">Putative HTH-type transcriptional regulatory protein VNG_2112C</fullName>
    </recommendedName>
</protein>
<organism>
    <name type="scientific">Halobacterium salinarum (strain ATCC 700922 / JCM 11081 / NRC-1)</name>
    <name type="common">Halobacterium halobium</name>
    <dbReference type="NCBI Taxonomy" id="64091"/>
    <lineage>
        <taxon>Archaea</taxon>
        <taxon>Methanobacteriati</taxon>
        <taxon>Methanobacteriota</taxon>
        <taxon>Stenosarchaea group</taxon>
        <taxon>Halobacteria</taxon>
        <taxon>Halobacteriales</taxon>
        <taxon>Halobacteriaceae</taxon>
        <taxon>Halobacterium</taxon>
        <taxon>Halobacterium salinarum NRC-34001</taxon>
    </lineage>
</organism>
<gene>
    <name type="ordered locus">VNG_2112C</name>
</gene>
<keyword id="KW-0238">DNA-binding</keyword>
<keyword id="KW-1185">Reference proteome</keyword>
<keyword id="KW-0804">Transcription</keyword>
<keyword id="KW-0805">Transcription regulation</keyword>
<evidence type="ECO:0000255" key="1">
    <source>
        <dbReference type="HAMAP-Rule" id="MF_00584"/>
    </source>
</evidence>
<evidence type="ECO:0000305" key="2"/>
<proteinExistence type="inferred from homology"/>
<comment type="sequence caution" evidence="2">
    <conflict type="erroneous initiation">
        <sequence resource="EMBL-CDS" id="AAG20253"/>
    </conflict>
</comment>
<reference key="1">
    <citation type="journal article" date="2000" name="Proc. Natl. Acad. Sci. U.S.A.">
        <title>Genome sequence of Halobacterium species NRC-1.</title>
        <authorList>
            <person name="Ng W.V."/>
            <person name="Kennedy S.P."/>
            <person name="Mahairas G.G."/>
            <person name="Berquist B."/>
            <person name="Pan M."/>
            <person name="Shukla H.D."/>
            <person name="Lasky S.R."/>
            <person name="Baliga N.S."/>
            <person name="Thorsson V."/>
            <person name="Sbrogna J."/>
            <person name="Swartzell S."/>
            <person name="Weir D."/>
            <person name="Hall J."/>
            <person name="Dahl T.A."/>
            <person name="Welti R."/>
            <person name="Goo Y.A."/>
            <person name="Leithauser B."/>
            <person name="Keller K."/>
            <person name="Cruz R."/>
            <person name="Danson M.J."/>
            <person name="Hough D.W."/>
            <person name="Maddocks D.G."/>
            <person name="Jablonski P.E."/>
            <person name="Krebs M.P."/>
            <person name="Angevine C.M."/>
            <person name="Dale H."/>
            <person name="Isenbarger T.A."/>
            <person name="Peck R.F."/>
            <person name="Pohlschroder M."/>
            <person name="Spudich J.L."/>
            <person name="Jung K.-H."/>
            <person name="Alam M."/>
            <person name="Freitas T."/>
            <person name="Hou S."/>
            <person name="Daniels C.J."/>
            <person name="Dennis P.P."/>
            <person name="Omer A.D."/>
            <person name="Ebhardt H."/>
            <person name="Lowe T.M."/>
            <person name="Liang P."/>
            <person name="Riley M."/>
            <person name="Hood L."/>
            <person name="DasSarma S."/>
        </authorList>
    </citation>
    <scope>NUCLEOTIDE SEQUENCE [LARGE SCALE GENOMIC DNA]</scope>
    <source>
        <strain>ATCC 700922 / JCM 11081 / NRC-1</strain>
    </source>
</reference>
<name>Y2112_HALSA</name>
<feature type="chain" id="PRO_0000144854" description="Putative HTH-type transcriptional regulatory protein VNG_2112C">
    <location>
        <begin position="1"/>
        <end position="320"/>
    </location>
</feature>
<feature type="domain" description="HTH cro/C1-type" evidence="1">
    <location>
        <begin position="132"/>
        <end position="189"/>
    </location>
</feature>
<feature type="DNA-binding region" description="H-T-H motif" evidence="1">
    <location>
        <begin position="143"/>
        <end position="162"/>
    </location>
</feature>